<sequence>MTIICIDGIIGAGKSTVTHRLKKNLYKCYEEPIDKWTLLPNLYNDMKKYATPFQFQVLFSQYDQYLSFKDCKETVVVERCPWTSKNIFTSLMIENNLFDLSAIDTYNNLYERLSYQVDHFIYIKVDSEMAFERIKKRDRFAEQNISFDYLKSLENKYATSLATLSPSTVTIIDGSNTIEEVEFDVKTAINNFLSH</sequence>
<gene>
    <name type="ORF">IIV6-143R</name>
</gene>
<keyword id="KW-0067">ATP-binding</keyword>
<keyword id="KW-0418">Kinase</keyword>
<keyword id="KW-0547">Nucleotide-binding</keyword>
<keyword id="KW-1185">Reference proteome</keyword>
<keyword id="KW-0808">Transferase</keyword>
<name>VF143_IIV6</name>
<organismHost>
    <name type="scientific">Acheta domesticus</name>
    <name type="common">House cricket</name>
    <dbReference type="NCBI Taxonomy" id="6997"/>
</organismHost>
<organismHost>
    <name type="scientific">Chilo suppressalis</name>
    <name type="common">Asiatic rice borer moth</name>
    <dbReference type="NCBI Taxonomy" id="168631"/>
</organismHost>
<organismHost>
    <name type="scientific">Gryllus bimaculatus</name>
    <name type="common">Two-spotted cricket</name>
    <dbReference type="NCBI Taxonomy" id="6999"/>
</organismHost>
<organismHost>
    <name type="scientific">Gryllus campestris</name>
    <dbReference type="NCBI Taxonomy" id="58607"/>
</organismHost>
<organismHost>
    <name type="scientific">Spodoptera frugiperda</name>
    <name type="common">Fall armyworm</name>
    <dbReference type="NCBI Taxonomy" id="7108"/>
</organismHost>
<protein>
    <recommendedName>
        <fullName>Putative kinase protein 143R</fullName>
        <ecNumber>2.7.-.-</ecNumber>
    </recommendedName>
</protein>
<feature type="chain" id="PRO_0000377741" description="Putative kinase protein 143R">
    <location>
        <begin position="1"/>
        <end position="195"/>
    </location>
</feature>
<feature type="active site" description="Proton acceptor" evidence="2">
    <location>
        <position position="78"/>
    </location>
</feature>
<feature type="binding site" evidence="1">
    <location>
        <begin position="8"/>
        <end position="16"/>
    </location>
    <ligand>
        <name>ATP</name>
        <dbReference type="ChEBI" id="CHEBI:30616"/>
    </ligand>
</feature>
<feature type="binding site" evidence="1">
    <location>
        <position position="31"/>
    </location>
    <ligand>
        <name>substrate</name>
    </ligand>
</feature>
<feature type="binding site" evidence="1">
    <location>
        <position position="43"/>
    </location>
    <ligand>
        <name>substrate</name>
    </ligand>
</feature>
<feature type="binding site" evidence="1">
    <location>
        <position position="54"/>
    </location>
    <ligand>
        <name>substrate</name>
    </ligand>
</feature>
<feature type="binding site" evidence="1">
    <location>
        <position position="79"/>
    </location>
    <ligand>
        <name>substrate</name>
    </ligand>
</feature>
<feature type="binding site" evidence="1">
    <location>
        <position position="142"/>
    </location>
    <ligand>
        <name>substrate</name>
    </ligand>
</feature>
<comment type="similarity">
    <text evidence="3">Belongs to the DCK/DGK family.</text>
</comment>
<organism>
    <name type="scientific">Invertebrate iridescent virus 6</name>
    <name type="common">IIV-6</name>
    <name type="synonym">Chilo iridescent virus</name>
    <dbReference type="NCBI Taxonomy" id="176652"/>
    <lineage>
        <taxon>Viruses</taxon>
        <taxon>Varidnaviria</taxon>
        <taxon>Bamfordvirae</taxon>
        <taxon>Nucleocytoviricota</taxon>
        <taxon>Megaviricetes</taxon>
        <taxon>Pimascovirales</taxon>
        <taxon>Iridoviridae</taxon>
        <taxon>Betairidovirinae</taxon>
        <taxon>Iridovirus</taxon>
    </lineage>
</organism>
<dbReference type="EC" id="2.7.-.-"/>
<dbReference type="EMBL" id="AF303741">
    <property type="protein sequence ID" value="AAB94460.1"/>
    <property type="molecule type" value="Genomic_DNA"/>
</dbReference>
<dbReference type="PIR" id="T03086">
    <property type="entry name" value="T03086"/>
</dbReference>
<dbReference type="RefSeq" id="NP_149606.1">
    <property type="nucleotide sequence ID" value="NC_003038.1"/>
</dbReference>
<dbReference type="SMR" id="O55749"/>
<dbReference type="KEGG" id="vg:1733368"/>
<dbReference type="OrthoDB" id="12726at10239"/>
<dbReference type="Proteomes" id="UP000001359">
    <property type="component" value="Genome"/>
</dbReference>
<dbReference type="GO" id="GO:0005524">
    <property type="term" value="F:ATP binding"/>
    <property type="evidence" value="ECO:0007669"/>
    <property type="project" value="UniProtKB-KW"/>
</dbReference>
<dbReference type="GO" id="GO:0019136">
    <property type="term" value="F:deoxynucleoside kinase activity"/>
    <property type="evidence" value="ECO:0007669"/>
    <property type="project" value="InterPro"/>
</dbReference>
<dbReference type="Gene3D" id="3.40.50.300">
    <property type="entry name" value="P-loop containing nucleotide triphosphate hydrolases"/>
    <property type="match status" value="1"/>
</dbReference>
<dbReference type="InterPro" id="IPR002624">
    <property type="entry name" value="DCK/DGK"/>
</dbReference>
<dbReference type="InterPro" id="IPR050566">
    <property type="entry name" value="Deoxyribonucleoside_kinase"/>
</dbReference>
<dbReference type="InterPro" id="IPR031314">
    <property type="entry name" value="DNK_dom"/>
</dbReference>
<dbReference type="InterPro" id="IPR027417">
    <property type="entry name" value="P-loop_NTPase"/>
</dbReference>
<dbReference type="PANTHER" id="PTHR10513:SF35">
    <property type="entry name" value="DEOXYADENOSINE KINASE"/>
    <property type="match status" value="1"/>
</dbReference>
<dbReference type="PANTHER" id="PTHR10513">
    <property type="entry name" value="DEOXYNUCLEOSIDE KINASE"/>
    <property type="match status" value="1"/>
</dbReference>
<dbReference type="Pfam" id="PF01712">
    <property type="entry name" value="dNK"/>
    <property type="match status" value="1"/>
</dbReference>
<dbReference type="PIRSF" id="PIRSF000705">
    <property type="entry name" value="DNK"/>
    <property type="match status" value="1"/>
</dbReference>
<dbReference type="SUPFAM" id="SSF52540">
    <property type="entry name" value="P-loop containing nucleoside triphosphate hydrolases"/>
    <property type="match status" value="1"/>
</dbReference>
<proteinExistence type="inferred from homology"/>
<evidence type="ECO:0000250" key="1"/>
<evidence type="ECO:0000255" key="2"/>
<evidence type="ECO:0000305" key="3"/>
<accession>O55749</accession>
<reference key="1">
    <citation type="journal article" date="2001" name="Virology">
        <title>Analysis of the first complete DNA sequence of an invertebrate iridovirus: coding strategy of the genome of Chilo iridescent virus.</title>
        <authorList>
            <person name="Jakob N.J."/>
            <person name="Mueller K."/>
            <person name="Bahr U."/>
            <person name="Darai G."/>
        </authorList>
    </citation>
    <scope>NUCLEOTIDE SEQUENCE [LARGE SCALE GENOMIC DNA]</scope>
</reference>
<reference key="2">
    <citation type="journal article" date="2007" name="Virol. J.">
        <title>Comparative genomic analysis of the family Iridoviridae: re-annotating and defining the core set of iridovirus genes.</title>
        <authorList>
            <person name="Eaton H.E."/>
            <person name="Metcalf J."/>
            <person name="Penny E."/>
            <person name="Tcherepanov V."/>
            <person name="Upton C."/>
            <person name="Brunetti C.R."/>
        </authorList>
    </citation>
    <scope>GENOME REANNOTATION</scope>
</reference>